<organism>
    <name type="scientific">Rhodopseudomonas palustris (strain TIE-1)</name>
    <dbReference type="NCBI Taxonomy" id="395960"/>
    <lineage>
        <taxon>Bacteria</taxon>
        <taxon>Pseudomonadati</taxon>
        <taxon>Pseudomonadota</taxon>
        <taxon>Alphaproteobacteria</taxon>
        <taxon>Hyphomicrobiales</taxon>
        <taxon>Nitrobacteraceae</taxon>
        <taxon>Rhodopseudomonas</taxon>
    </lineage>
</organism>
<feature type="chain" id="PRO_1000148133" description="Bifunctional protein HldE">
    <location>
        <begin position="1"/>
        <end position="490"/>
    </location>
</feature>
<feature type="region of interest" description="Ribokinase">
    <location>
        <begin position="1"/>
        <end position="328"/>
    </location>
</feature>
<feature type="region of interest" description="Cytidylyltransferase">
    <location>
        <begin position="358"/>
        <end position="490"/>
    </location>
</feature>
<feature type="active site" evidence="1">
    <location>
        <position position="275"/>
    </location>
</feature>
<feature type="binding site" evidence="1">
    <location>
        <begin position="205"/>
        <end position="208"/>
    </location>
    <ligand>
        <name>ATP</name>
        <dbReference type="ChEBI" id="CHEBI:30616"/>
    </ligand>
</feature>
<sequence>MFSFDALLQAIARQTVLCVGDLMLDEFVYGEVSRISPEAPAPVIAVQRSETNIGGAGNVARNIAAIGARCIFVGLIGDDATGRFLESELGSESRIEPVLVCDGSRPTTRKVRFVSEHFSTHMLRADWETASPAAADIEQRLLDAILPQLARADIVLLSDYAKGVLTARVIRDTIDAAKKLGKRVIVDPKSANFAIYRGATLLTPNRKEFTAATRSAAATDDEIAAAAQDAMALAECEAMLVTKSEHGMTLVPRGGEPIHVPALPVKVRDVSGAGDTVAAVLAVVLASGANWAAAMRAASAAAAVAVSKNGTAVVTPAELRRRILPHASLAAEEKIIGSDAELDERLKQWRREGLRVGFTNGCFDILHPGHVKVLTAARGACDRLIVGLNSDASVRRLKGESRPVQHERARAEVLAALEAVDLVAIFEEDTPLRLITRIEPSVLVKGGDYTREQVVGHEIVAAKGGDVLLVDVLPGFSTTSLVARAREGQS</sequence>
<name>HLDE_RHOPT</name>
<proteinExistence type="inferred from homology"/>
<dbReference type="EC" id="2.7.1.167" evidence="1"/>
<dbReference type="EC" id="2.7.7.70" evidence="1"/>
<dbReference type="EMBL" id="CP001096">
    <property type="protein sequence ID" value="ACF03003.1"/>
    <property type="molecule type" value="Genomic_DNA"/>
</dbReference>
<dbReference type="RefSeq" id="WP_012497319.1">
    <property type="nucleotide sequence ID" value="NC_011004.1"/>
</dbReference>
<dbReference type="SMR" id="B3QJ47"/>
<dbReference type="KEGG" id="rpt:Rpal_4507"/>
<dbReference type="HOGENOM" id="CLU_021150_2_1_5"/>
<dbReference type="OrthoDB" id="9802794at2"/>
<dbReference type="UniPathway" id="UPA00356">
    <property type="reaction ID" value="UER00437"/>
</dbReference>
<dbReference type="UniPathway" id="UPA00356">
    <property type="reaction ID" value="UER00439"/>
</dbReference>
<dbReference type="Proteomes" id="UP000001725">
    <property type="component" value="Chromosome"/>
</dbReference>
<dbReference type="GO" id="GO:0005829">
    <property type="term" value="C:cytosol"/>
    <property type="evidence" value="ECO:0007669"/>
    <property type="project" value="TreeGrafter"/>
</dbReference>
<dbReference type="GO" id="GO:0005524">
    <property type="term" value="F:ATP binding"/>
    <property type="evidence" value="ECO:0007669"/>
    <property type="project" value="UniProtKB-UniRule"/>
</dbReference>
<dbReference type="GO" id="GO:0033785">
    <property type="term" value="F:heptose 7-phosphate kinase activity"/>
    <property type="evidence" value="ECO:0007669"/>
    <property type="project" value="UniProtKB-UniRule"/>
</dbReference>
<dbReference type="GO" id="GO:0033786">
    <property type="term" value="F:heptose-1-phosphate adenylyltransferase activity"/>
    <property type="evidence" value="ECO:0007669"/>
    <property type="project" value="UniProtKB-UniRule"/>
</dbReference>
<dbReference type="GO" id="GO:0016773">
    <property type="term" value="F:phosphotransferase activity, alcohol group as acceptor"/>
    <property type="evidence" value="ECO:0007669"/>
    <property type="project" value="InterPro"/>
</dbReference>
<dbReference type="GO" id="GO:0097171">
    <property type="term" value="P:ADP-L-glycero-beta-D-manno-heptose biosynthetic process"/>
    <property type="evidence" value="ECO:0007669"/>
    <property type="project" value="UniProtKB-UniPathway"/>
</dbReference>
<dbReference type="CDD" id="cd01172">
    <property type="entry name" value="RfaE_like"/>
    <property type="match status" value="1"/>
</dbReference>
<dbReference type="Gene3D" id="3.40.1190.20">
    <property type="match status" value="1"/>
</dbReference>
<dbReference type="Gene3D" id="3.40.50.620">
    <property type="entry name" value="HUPs"/>
    <property type="match status" value="1"/>
</dbReference>
<dbReference type="HAMAP" id="MF_01603">
    <property type="entry name" value="HldE"/>
    <property type="match status" value="1"/>
</dbReference>
<dbReference type="InterPro" id="IPR023030">
    <property type="entry name" value="Bifunc_HldE"/>
</dbReference>
<dbReference type="InterPro" id="IPR002173">
    <property type="entry name" value="Carboh/pur_kinase_PfkB_CS"/>
</dbReference>
<dbReference type="InterPro" id="IPR004821">
    <property type="entry name" value="Cyt_trans-like"/>
</dbReference>
<dbReference type="InterPro" id="IPR011611">
    <property type="entry name" value="PfkB_dom"/>
</dbReference>
<dbReference type="InterPro" id="IPR011913">
    <property type="entry name" value="RfaE_dom_I"/>
</dbReference>
<dbReference type="InterPro" id="IPR011914">
    <property type="entry name" value="RfaE_dom_II"/>
</dbReference>
<dbReference type="InterPro" id="IPR029056">
    <property type="entry name" value="Ribokinase-like"/>
</dbReference>
<dbReference type="InterPro" id="IPR014729">
    <property type="entry name" value="Rossmann-like_a/b/a_fold"/>
</dbReference>
<dbReference type="NCBIfam" id="TIGR00125">
    <property type="entry name" value="cyt_tran_rel"/>
    <property type="match status" value="1"/>
</dbReference>
<dbReference type="NCBIfam" id="TIGR02198">
    <property type="entry name" value="rfaE_dom_I"/>
    <property type="match status" value="1"/>
</dbReference>
<dbReference type="NCBIfam" id="TIGR02199">
    <property type="entry name" value="rfaE_dom_II"/>
    <property type="match status" value="1"/>
</dbReference>
<dbReference type="PANTHER" id="PTHR46969">
    <property type="entry name" value="BIFUNCTIONAL PROTEIN HLDE"/>
    <property type="match status" value="1"/>
</dbReference>
<dbReference type="PANTHER" id="PTHR46969:SF1">
    <property type="entry name" value="BIFUNCTIONAL PROTEIN HLDE"/>
    <property type="match status" value="1"/>
</dbReference>
<dbReference type="Pfam" id="PF01467">
    <property type="entry name" value="CTP_transf_like"/>
    <property type="match status" value="1"/>
</dbReference>
<dbReference type="Pfam" id="PF00294">
    <property type="entry name" value="PfkB"/>
    <property type="match status" value="1"/>
</dbReference>
<dbReference type="SUPFAM" id="SSF52374">
    <property type="entry name" value="Nucleotidylyl transferase"/>
    <property type="match status" value="1"/>
</dbReference>
<dbReference type="SUPFAM" id="SSF53613">
    <property type="entry name" value="Ribokinase-like"/>
    <property type="match status" value="1"/>
</dbReference>
<dbReference type="PROSITE" id="PS00583">
    <property type="entry name" value="PFKB_KINASES_1"/>
    <property type="match status" value="1"/>
</dbReference>
<comment type="function">
    <text evidence="1">Catalyzes the phosphorylation of D-glycero-D-manno-heptose 7-phosphate at the C-1 position to selectively form D-glycero-beta-D-manno-heptose-1,7-bisphosphate.</text>
</comment>
<comment type="function">
    <text evidence="1">Catalyzes the ADP transfer from ATP to D-glycero-beta-D-manno-heptose 1-phosphate, yielding ADP-D-glycero-beta-D-manno-heptose.</text>
</comment>
<comment type="catalytic activity">
    <reaction evidence="1">
        <text>D-glycero-beta-D-manno-heptose 7-phosphate + ATP = D-glycero-beta-D-manno-heptose 1,7-bisphosphate + ADP + H(+)</text>
        <dbReference type="Rhea" id="RHEA:27473"/>
        <dbReference type="ChEBI" id="CHEBI:15378"/>
        <dbReference type="ChEBI" id="CHEBI:30616"/>
        <dbReference type="ChEBI" id="CHEBI:60204"/>
        <dbReference type="ChEBI" id="CHEBI:60208"/>
        <dbReference type="ChEBI" id="CHEBI:456216"/>
        <dbReference type="EC" id="2.7.1.167"/>
    </reaction>
</comment>
<comment type="catalytic activity">
    <reaction evidence="1">
        <text>D-glycero-beta-D-manno-heptose 1-phosphate + ATP + H(+) = ADP-D-glycero-beta-D-manno-heptose + diphosphate</text>
        <dbReference type="Rhea" id="RHEA:27465"/>
        <dbReference type="ChEBI" id="CHEBI:15378"/>
        <dbReference type="ChEBI" id="CHEBI:30616"/>
        <dbReference type="ChEBI" id="CHEBI:33019"/>
        <dbReference type="ChEBI" id="CHEBI:59967"/>
        <dbReference type="ChEBI" id="CHEBI:61593"/>
        <dbReference type="EC" id="2.7.7.70"/>
    </reaction>
</comment>
<comment type="pathway">
    <text evidence="1">Nucleotide-sugar biosynthesis; ADP-L-glycero-beta-D-manno-heptose biosynthesis; ADP-L-glycero-beta-D-manno-heptose from D-glycero-beta-D-manno-heptose 7-phosphate: step 1/4.</text>
</comment>
<comment type="pathway">
    <text evidence="1">Nucleotide-sugar biosynthesis; ADP-L-glycero-beta-D-manno-heptose biosynthesis; ADP-L-glycero-beta-D-manno-heptose from D-glycero-beta-D-manno-heptose 7-phosphate: step 3/4.</text>
</comment>
<comment type="subunit">
    <text evidence="1">Homodimer.</text>
</comment>
<comment type="similarity">
    <text evidence="1">In the N-terminal section; belongs to the carbohydrate kinase PfkB family.</text>
</comment>
<comment type="similarity">
    <text evidence="1">In the C-terminal section; belongs to the cytidylyltransferase family.</text>
</comment>
<protein>
    <recommendedName>
        <fullName evidence="1">Bifunctional protein HldE</fullName>
    </recommendedName>
    <domain>
        <recommendedName>
            <fullName evidence="1">D-beta-D-heptose 7-phosphate kinase</fullName>
            <ecNumber evidence="1">2.7.1.167</ecNumber>
        </recommendedName>
        <alternativeName>
            <fullName evidence="1">D-beta-D-heptose 7-phosphotransferase</fullName>
        </alternativeName>
        <alternativeName>
            <fullName evidence="1">D-glycero-beta-D-manno-heptose-7-phosphate kinase</fullName>
        </alternativeName>
    </domain>
    <domain>
        <recommendedName>
            <fullName evidence="1">D-beta-D-heptose 1-phosphate adenylyltransferase</fullName>
            <ecNumber evidence="1">2.7.7.70</ecNumber>
        </recommendedName>
        <alternativeName>
            <fullName evidence="1">D-glycero-beta-D-manno-heptose 1-phosphate adenylyltransferase</fullName>
        </alternativeName>
    </domain>
</protein>
<accession>B3QJ47</accession>
<reference key="1">
    <citation type="submission" date="2008-05" db="EMBL/GenBank/DDBJ databases">
        <title>Complete sequence of Rhodopseudomonas palustris TIE-1.</title>
        <authorList>
            <consortium name="US DOE Joint Genome Institute"/>
            <person name="Lucas S."/>
            <person name="Copeland A."/>
            <person name="Lapidus A."/>
            <person name="Glavina del Rio T."/>
            <person name="Dalin E."/>
            <person name="Tice H."/>
            <person name="Pitluck S."/>
            <person name="Chain P."/>
            <person name="Malfatti S."/>
            <person name="Shin M."/>
            <person name="Vergez L."/>
            <person name="Lang D."/>
            <person name="Schmutz J."/>
            <person name="Larimer F."/>
            <person name="Land M."/>
            <person name="Hauser L."/>
            <person name="Kyrpides N."/>
            <person name="Mikhailova N."/>
            <person name="Emerson D."/>
            <person name="Newman D.K."/>
            <person name="Roden E."/>
            <person name="Richardson P."/>
        </authorList>
    </citation>
    <scope>NUCLEOTIDE SEQUENCE [LARGE SCALE GENOMIC DNA]</scope>
    <source>
        <strain>TIE-1</strain>
    </source>
</reference>
<evidence type="ECO:0000255" key="1">
    <source>
        <dbReference type="HAMAP-Rule" id="MF_01603"/>
    </source>
</evidence>
<gene>
    <name evidence="1" type="primary">hldE</name>
    <name type="ordered locus">Rpal_4507</name>
</gene>
<keyword id="KW-0067">ATP-binding</keyword>
<keyword id="KW-0119">Carbohydrate metabolism</keyword>
<keyword id="KW-0418">Kinase</keyword>
<keyword id="KW-0511">Multifunctional enzyme</keyword>
<keyword id="KW-0547">Nucleotide-binding</keyword>
<keyword id="KW-0548">Nucleotidyltransferase</keyword>
<keyword id="KW-0808">Transferase</keyword>